<reference key="1">
    <citation type="journal article" date="2008" name="Genome Res.">
        <title>Chlamydia trachomatis: genome sequence analysis of lymphogranuloma venereum isolates.</title>
        <authorList>
            <person name="Thomson N.R."/>
            <person name="Holden M.T.G."/>
            <person name="Carder C."/>
            <person name="Lennard N."/>
            <person name="Lockey S.J."/>
            <person name="Marsh P."/>
            <person name="Skipp P."/>
            <person name="O'Connor C.D."/>
            <person name="Goodhead I."/>
            <person name="Norbertzcak H."/>
            <person name="Harris B."/>
            <person name="Ormond D."/>
            <person name="Rance R."/>
            <person name="Quail M.A."/>
            <person name="Parkhill J."/>
            <person name="Stephens R.S."/>
            <person name="Clarke I.N."/>
        </authorList>
    </citation>
    <scope>NUCLEOTIDE SEQUENCE [LARGE SCALE GENOMIC DNA]</scope>
    <source>
        <strain>ATCC VR-902B / DSM 19102 / 434/Bu</strain>
    </source>
</reference>
<accession>B0B7N5</accession>
<gene>
    <name evidence="1" type="primary">rplK</name>
    <name type="ordered locus">CTL0571</name>
</gene>
<proteinExistence type="inferred from homology"/>
<feature type="chain" id="PRO_1000195592" description="Large ribosomal subunit protein uL11">
    <location>
        <begin position="1"/>
        <end position="141"/>
    </location>
</feature>
<dbReference type="EMBL" id="AM884176">
    <property type="protein sequence ID" value="CAP04011.1"/>
    <property type="molecule type" value="Genomic_DNA"/>
</dbReference>
<dbReference type="RefSeq" id="WP_009872556.1">
    <property type="nucleotide sequence ID" value="NC_010287.1"/>
</dbReference>
<dbReference type="RefSeq" id="YP_001654647.1">
    <property type="nucleotide sequence ID" value="NC_010287.1"/>
</dbReference>
<dbReference type="SMR" id="B0B7N5"/>
<dbReference type="KEGG" id="ctb:CTL0571"/>
<dbReference type="PATRIC" id="fig|471472.4.peg.612"/>
<dbReference type="HOGENOM" id="CLU_074237_2_0_0"/>
<dbReference type="Proteomes" id="UP001154402">
    <property type="component" value="Chromosome"/>
</dbReference>
<dbReference type="GO" id="GO:0022625">
    <property type="term" value="C:cytosolic large ribosomal subunit"/>
    <property type="evidence" value="ECO:0007669"/>
    <property type="project" value="TreeGrafter"/>
</dbReference>
<dbReference type="GO" id="GO:0070180">
    <property type="term" value="F:large ribosomal subunit rRNA binding"/>
    <property type="evidence" value="ECO:0007669"/>
    <property type="project" value="UniProtKB-UniRule"/>
</dbReference>
<dbReference type="GO" id="GO:0003735">
    <property type="term" value="F:structural constituent of ribosome"/>
    <property type="evidence" value="ECO:0007669"/>
    <property type="project" value="InterPro"/>
</dbReference>
<dbReference type="GO" id="GO:0006412">
    <property type="term" value="P:translation"/>
    <property type="evidence" value="ECO:0007669"/>
    <property type="project" value="UniProtKB-UniRule"/>
</dbReference>
<dbReference type="CDD" id="cd00349">
    <property type="entry name" value="Ribosomal_L11"/>
    <property type="match status" value="1"/>
</dbReference>
<dbReference type="FunFam" id="1.10.10.250:FF:000001">
    <property type="entry name" value="50S ribosomal protein L11"/>
    <property type="match status" value="1"/>
</dbReference>
<dbReference type="FunFam" id="3.30.1550.10:FF:000001">
    <property type="entry name" value="50S ribosomal protein L11"/>
    <property type="match status" value="1"/>
</dbReference>
<dbReference type="Gene3D" id="1.10.10.250">
    <property type="entry name" value="Ribosomal protein L11, C-terminal domain"/>
    <property type="match status" value="1"/>
</dbReference>
<dbReference type="Gene3D" id="3.30.1550.10">
    <property type="entry name" value="Ribosomal protein L11/L12, N-terminal domain"/>
    <property type="match status" value="1"/>
</dbReference>
<dbReference type="HAMAP" id="MF_00736">
    <property type="entry name" value="Ribosomal_uL11"/>
    <property type="match status" value="1"/>
</dbReference>
<dbReference type="InterPro" id="IPR000911">
    <property type="entry name" value="Ribosomal_uL11"/>
</dbReference>
<dbReference type="InterPro" id="IPR006519">
    <property type="entry name" value="Ribosomal_uL11_bac-typ"/>
</dbReference>
<dbReference type="InterPro" id="IPR020783">
    <property type="entry name" value="Ribosomal_uL11_C"/>
</dbReference>
<dbReference type="InterPro" id="IPR036769">
    <property type="entry name" value="Ribosomal_uL11_C_sf"/>
</dbReference>
<dbReference type="InterPro" id="IPR020785">
    <property type="entry name" value="Ribosomal_uL11_CS"/>
</dbReference>
<dbReference type="InterPro" id="IPR020784">
    <property type="entry name" value="Ribosomal_uL11_N"/>
</dbReference>
<dbReference type="InterPro" id="IPR036796">
    <property type="entry name" value="Ribosomal_uL11_N_sf"/>
</dbReference>
<dbReference type="NCBIfam" id="TIGR01632">
    <property type="entry name" value="L11_bact"/>
    <property type="match status" value="1"/>
</dbReference>
<dbReference type="PANTHER" id="PTHR11661">
    <property type="entry name" value="60S RIBOSOMAL PROTEIN L12"/>
    <property type="match status" value="1"/>
</dbReference>
<dbReference type="PANTHER" id="PTHR11661:SF1">
    <property type="entry name" value="LARGE RIBOSOMAL SUBUNIT PROTEIN UL11M"/>
    <property type="match status" value="1"/>
</dbReference>
<dbReference type="Pfam" id="PF00298">
    <property type="entry name" value="Ribosomal_L11"/>
    <property type="match status" value="1"/>
</dbReference>
<dbReference type="Pfam" id="PF03946">
    <property type="entry name" value="Ribosomal_L11_N"/>
    <property type="match status" value="1"/>
</dbReference>
<dbReference type="SMART" id="SM00649">
    <property type="entry name" value="RL11"/>
    <property type="match status" value="1"/>
</dbReference>
<dbReference type="SUPFAM" id="SSF54747">
    <property type="entry name" value="Ribosomal L11/L12e N-terminal domain"/>
    <property type="match status" value="1"/>
</dbReference>
<dbReference type="SUPFAM" id="SSF46906">
    <property type="entry name" value="Ribosomal protein L11, C-terminal domain"/>
    <property type="match status" value="1"/>
</dbReference>
<dbReference type="PROSITE" id="PS00359">
    <property type="entry name" value="RIBOSOMAL_L11"/>
    <property type="match status" value="1"/>
</dbReference>
<name>RL11_CHLT2</name>
<comment type="function">
    <text evidence="1">Forms part of the ribosomal stalk which helps the ribosome interact with GTP-bound translation factors.</text>
</comment>
<comment type="subunit">
    <text evidence="1">Part of the ribosomal stalk of the 50S ribosomal subunit. Interacts with L10 and the large rRNA to form the base of the stalk. L10 forms an elongated spine to which L12 dimers bind in a sequential fashion forming a multimeric L10(L12)X complex.</text>
</comment>
<comment type="PTM">
    <text evidence="1">One or more lysine residues are methylated.</text>
</comment>
<comment type="similarity">
    <text evidence="1">Belongs to the universal ribosomal protein uL11 family.</text>
</comment>
<keyword id="KW-0488">Methylation</keyword>
<keyword id="KW-0687">Ribonucleoprotein</keyword>
<keyword id="KW-0689">Ribosomal protein</keyword>
<keyword id="KW-0694">RNA-binding</keyword>
<keyword id="KW-0699">rRNA-binding</keyword>
<organism>
    <name type="scientific">Chlamydia trachomatis serovar L2 (strain ATCC VR-902B / DSM 19102 / 434/Bu)</name>
    <dbReference type="NCBI Taxonomy" id="471472"/>
    <lineage>
        <taxon>Bacteria</taxon>
        <taxon>Pseudomonadati</taxon>
        <taxon>Chlamydiota</taxon>
        <taxon>Chlamydiia</taxon>
        <taxon>Chlamydiales</taxon>
        <taxon>Chlamydiaceae</taxon>
        <taxon>Chlamydia/Chlamydophila group</taxon>
        <taxon>Chlamydia</taxon>
    </lineage>
</organism>
<sequence>MSNKKIIKIIKLQIPGGKANPAPPIGPALGAAGVNIMGFCKEFNAATQDRPGDLLPVVITVYSDKTFSFVMKQSPVSSLIKKALGLESGSKIPNRNKVGKLTRAQITAIAEQKMKDMDVVLLESAERMVEGTARSMGVDVE</sequence>
<protein>
    <recommendedName>
        <fullName evidence="1">Large ribosomal subunit protein uL11</fullName>
    </recommendedName>
    <alternativeName>
        <fullName evidence="2">50S ribosomal protein L11</fullName>
    </alternativeName>
</protein>
<evidence type="ECO:0000255" key="1">
    <source>
        <dbReference type="HAMAP-Rule" id="MF_00736"/>
    </source>
</evidence>
<evidence type="ECO:0000305" key="2"/>